<dbReference type="EMBL" id="M17437">
    <property type="protein sequence ID" value="AAA42829.1"/>
    <property type="molecule type" value="Genomic_RNA"/>
</dbReference>
<dbReference type="SMR" id="P05308"/>
<dbReference type="GO" id="GO:0039625">
    <property type="term" value="C:viral inner capsid"/>
    <property type="evidence" value="ECO:0007669"/>
    <property type="project" value="UniProtKB-KW"/>
</dbReference>
<dbReference type="GO" id="GO:0005198">
    <property type="term" value="F:structural molecule activity"/>
    <property type="evidence" value="ECO:0007669"/>
    <property type="project" value="InterPro"/>
</dbReference>
<dbReference type="GO" id="GO:0075512">
    <property type="term" value="P:clathrin-dependent endocytosis of virus by host cell"/>
    <property type="evidence" value="ECO:0007669"/>
    <property type="project" value="UniProtKB-KW"/>
</dbReference>
<dbReference type="GO" id="GO:0019062">
    <property type="term" value="P:virion attachment to host cell"/>
    <property type="evidence" value="ECO:0007669"/>
    <property type="project" value="UniProtKB-KW"/>
</dbReference>
<dbReference type="InterPro" id="IPR001742">
    <property type="entry name" value="Capsid_VP2_Orbivir"/>
</dbReference>
<dbReference type="Pfam" id="PF00898">
    <property type="entry name" value="Orbi_VP2"/>
    <property type="match status" value="1"/>
</dbReference>
<evidence type="ECO:0000250" key="1"/>
<evidence type="ECO:0000305" key="2"/>
<feature type="chain" id="PRO_0000222685" description="Outer capsid protein VP2">
    <location>
        <begin position="1"/>
        <end position="956"/>
    </location>
</feature>
<keyword id="KW-0167">Capsid protein</keyword>
<keyword id="KW-1165">Clathrin-mediated endocytosis of virus by host</keyword>
<keyword id="KW-0945">Host-virus interaction</keyword>
<keyword id="KW-1153">Inner capsid protein</keyword>
<keyword id="KW-1161">Viral attachment to host cell</keyword>
<keyword id="KW-1162">Viral penetration into host cytoplasm</keyword>
<keyword id="KW-0946">Virion</keyword>
<keyword id="KW-1164">Virus endocytosis by host</keyword>
<keyword id="KW-1160">Virus entry into host cell</keyword>
<gene>
    <name type="primary">Segment-2</name>
</gene>
<protein>
    <recommendedName>
        <fullName>Outer capsid protein VP2</fullName>
    </recommendedName>
</protein>
<organism>
    <name type="scientific">Bluetongue virus 11 (isolate USA)</name>
    <name type="common">BTV 11</name>
    <dbReference type="NCBI Taxonomy" id="33716"/>
    <lineage>
        <taxon>Viruses</taxon>
        <taxon>Riboviria</taxon>
        <taxon>Orthornavirae</taxon>
        <taxon>Duplornaviricota</taxon>
        <taxon>Resentoviricetes</taxon>
        <taxon>Reovirales</taxon>
        <taxon>Sedoreoviridae</taxon>
        <taxon>Orbivirus</taxon>
        <taxon>Bluetongue virus</taxon>
    </lineage>
</organism>
<sequence length="956" mass="110050">MEEFVIPVFSETEIPYSLLSHYPLAVRTNVKIANVDEGHDVVKIPESDMIDVPRVSIVEALAAKPTRNDGIVVPRLLDITLRAYDDRKAMKSARGVEFMTNAKWMKWAIDDRMDIQPLKVAIDDHNAVNHQLFNCIVKARPANADTVYYSYFPLRDKVKKCNHTNLDLLRGLTTTEMFHMLQGAAYCLKSSYELITNSERNNTEETYAPGVHNRIRLVRGTRIGYKGEAYSRFVSSLVQVRIQGQTPPEIVDDIARLNEIRTEWINAQFDSTKIRALELCKILSAIGRKMLNTHEEPKDEMDLSTRFQFKLDDKFKKTDSEHINIFNVGAPATHEGRFYALIAIAATDTQRGRVWRTNPYPCLRGALIAAECQLGDVYHTLRQVYKWSLRQDYGRTEVPLENNKYVFSRINLFDSNLEVGDQVVHWKYEIDGPAETTYDNGYICKTEREDGELVCKISEEKYKTMLDRMIQGGWDQERFKLYSVLTDPNLLTIDFEKDAYLNIRSEFVLPSYFDQWIYSPMFNARLRITHGEIGTRKSADPWNKRVVFGYVKASTESPEYALGQYFDTRIQLYGDALSLKQSQSAVFQHQSQQEDFPVLTSYAKGDVVCPHSGGALYTFRKVALMLMANYERLSPDLHEGMEDHTYTHPSIGGANQKRILEMRDFSQLICFIIDYIFERHDQLRDMREARRILYLVQSLGEPQRLDVLSVASPNFSRYFLKLKDVQRISDLNVINFLPLLFLIQDNISYWHRQWAVPMILYDDTIKLIPVEVGAYANRFGIKSFFNFTRFHPGDAKKRQKADDTHKEFGLISFNYYANTKIAQGGVHTPVVTTKLDTLKIHLSSLCAGLADSVVYTLPVAHPKKCIVLIIVGDDKLEPHVRSEQVVSKYYFSRKHVSGVVSICIGQNDQLKVYSSGIVRHRICEKFILRYKCKVVLVKMPGYVFGNDELMTKLLNV</sequence>
<reference key="1">
    <citation type="journal article" date="1987" name="Virology">
        <title>Identification and characterization of conserved and variable regions in the neutralization VP2 gene of bluetongue virus.</title>
        <authorList>
            <person name="Ghiasi H."/>
            <person name="Fukusho A."/>
            <person name="Eshita Y."/>
            <person name="Roy P."/>
        </authorList>
    </citation>
    <scope>NUCLEOTIDE SEQUENCE [GENOMIC RNA]</scope>
</reference>
<name>VP2_BTV11</name>
<organismHost>
    <name type="scientific">Antilocapra americana</name>
    <name type="common">Pronghorn</name>
    <dbReference type="NCBI Taxonomy" id="9891"/>
</organismHost>
<organismHost>
    <name type="scientific">Bos taurus</name>
    <name type="common">Bovine</name>
    <dbReference type="NCBI Taxonomy" id="9913"/>
</organismHost>
<organismHost>
    <name type="scientific">Capra hircus</name>
    <name type="common">Goat</name>
    <dbReference type="NCBI Taxonomy" id="9925"/>
</organismHost>
<organismHost>
    <name type="scientific">Culicoides variipennis</name>
    <name type="common">Biting midge</name>
    <dbReference type="NCBI Taxonomy" id="46212"/>
</organismHost>
<organismHost>
    <name type="scientific">Ovis aries</name>
    <name type="common">Sheep</name>
    <dbReference type="NCBI Taxonomy" id="9940"/>
</organismHost>
<comment type="function">
    <text evidence="1">The VP2 protein is one of the two proteins (with VP5) which constitute the virus particle outer capsid. It is the major target of the host immunogenic response. Responsible for viral attachment to target host cell, probably by binding to sialic acid. This attachment induces virion internalization predominantly through clathrin-dependent endocytosis (By similarity).</text>
</comment>
<comment type="subcellular location">
    <subcellularLocation>
        <location evidence="2">Virion</location>
    </subcellularLocation>
</comment>
<comment type="similarity">
    <text evidence="2">Belongs to the orbivirus VP2 family.</text>
</comment>
<accession>P05308</accession>
<proteinExistence type="inferred from homology"/>